<accession>Q669L0</accession>
<reference key="1">
    <citation type="journal article" date="2004" name="Proc. Natl. Acad. Sci. U.S.A.">
        <title>Insights into the evolution of Yersinia pestis through whole-genome comparison with Yersinia pseudotuberculosis.</title>
        <authorList>
            <person name="Chain P.S.G."/>
            <person name="Carniel E."/>
            <person name="Larimer F.W."/>
            <person name="Lamerdin J."/>
            <person name="Stoutland P.O."/>
            <person name="Regala W.M."/>
            <person name="Georgescu A.M."/>
            <person name="Vergez L.M."/>
            <person name="Land M.L."/>
            <person name="Motin V.L."/>
            <person name="Brubaker R.R."/>
            <person name="Fowler J."/>
            <person name="Hinnebusch J."/>
            <person name="Marceau M."/>
            <person name="Medigue C."/>
            <person name="Simonet M."/>
            <person name="Chenal-Francisque V."/>
            <person name="Souza B."/>
            <person name="Dacheux D."/>
            <person name="Elliott J.M."/>
            <person name="Derbise A."/>
            <person name="Hauser L.J."/>
            <person name="Garcia E."/>
        </authorList>
    </citation>
    <scope>NUCLEOTIDE SEQUENCE [LARGE SCALE GENOMIC DNA]</scope>
    <source>
        <strain>IP32953</strain>
    </source>
</reference>
<comment type="function">
    <text evidence="1">Catalyzes the reversible formation of acyl-phosphate (acyl-PO(4)) from acyl-[acyl-carrier-protein] (acyl-ACP). This enzyme utilizes acyl-ACP as fatty acyl donor, but not acyl-CoA.</text>
</comment>
<comment type="catalytic activity">
    <reaction evidence="1">
        <text>a fatty acyl-[ACP] + phosphate = an acyl phosphate + holo-[ACP]</text>
        <dbReference type="Rhea" id="RHEA:42292"/>
        <dbReference type="Rhea" id="RHEA-COMP:9685"/>
        <dbReference type="Rhea" id="RHEA-COMP:14125"/>
        <dbReference type="ChEBI" id="CHEBI:43474"/>
        <dbReference type="ChEBI" id="CHEBI:59918"/>
        <dbReference type="ChEBI" id="CHEBI:64479"/>
        <dbReference type="ChEBI" id="CHEBI:138651"/>
        <dbReference type="EC" id="2.3.1.274"/>
    </reaction>
</comment>
<comment type="pathway">
    <text evidence="1">Lipid metabolism; phospholipid metabolism.</text>
</comment>
<comment type="subunit">
    <text evidence="1">Homodimer. Probably interacts with PlsY.</text>
</comment>
<comment type="subcellular location">
    <subcellularLocation>
        <location evidence="1">Cytoplasm</location>
    </subcellularLocation>
    <text evidence="1">Associated with the membrane possibly through PlsY.</text>
</comment>
<comment type="similarity">
    <text evidence="1">Belongs to the PlsX family.</text>
</comment>
<sequence length="344" mass="36636">MACLTLALDAMGGDFGPCVTVPASLQALASNPQLKLLLVGNPDTITPLLANADSLLLERLQVIPAEHVIASDAKPSQAIRASRGTSMRVALELVKNGEAAACVSAGNTGALMGLAKMMIKPLEGIARPALMTVIPNQRRSKTVVLDLGANVECDSTMLVQFAVMGSVMAEEVVGIVEPRVALLNIGEEENKGLDNIREAAAVLKNTPAINYIGYLEGNDLLTGKTDVMVCDGFVGNVTLKTMEGVIRMFLSLLKPSGEGSKQSWWLKLIGRWLQKRVAKRFGHLNPDQYNGACLLGLRGIVIKSHGAANQRAFAVAIEQAVQAVQRQVPERIAARLEAVLPKSD</sequence>
<gene>
    <name evidence="1" type="primary">plsX</name>
    <name type="ordered locus">YPTB2474</name>
</gene>
<proteinExistence type="inferred from homology"/>
<dbReference type="EC" id="2.3.1.274" evidence="1"/>
<dbReference type="EMBL" id="BX936398">
    <property type="protein sequence ID" value="CAH21712.1"/>
    <property type="molecule type" value="Genomic_DNA"/>
</dbReference>
<dbReference type="RefSeq" id="WP_002210932.1">
    <property type="nucleotide sequence ID" value="NZ_CP009712.1"/>
</dbReference>
<dbReference type="SMR" id="Q669L0"/>
<dbReference type="GeneID" id="57976975"/>
<dbReference type="KEGG" id="yps:YPTB2474"/>
<dbReference type="UniPathway" id="UPA00085"/>
<dbReference type="Proteomes" id="UP000001011">
    <property type="component" value="Chromosome"/>
</dbReference>
<dbReference type="GO" id="GO:0005737">
    <property type="term" value="C:cytoplasm"/>
    <property type="evidence" value="ECO:0007669"/>
    <property type="project" value="UniProtKB-SubCell"/>
</dbReference>
<dbReference type="GO" id="GO:0043811">
    <property type="term" value="F:phosphate:acyl-[acyl carrier protein] acyltransferase activity"/>
    <property type="evidence" value="ECO:0007669"/>
    <property type="project" value="UniProtKB-UniRule"/>
</dbReference>
<dbReference type="GO" id="GO:0006633">
    <property type="term" value="P:fatty acid biosynthetic process"/>
    <property type="evidence" value="ECO:0007669"/>
    <property type="project" value="UniProtKB-UniRule"/>
</dbReference>
<dbReference type="GO" id="GO:0008654">
    <property type="term" value="P:phospholipid biosynthetic process"/>
    <property type="evidence" value="ECO:0007669"/>
    <property type="project" value="UniProtKB-KW"/>
</dbReference>
<dbReference type="FunFam" id="3.40.718.10:FF:000008">
    <property type="entry name" value="Phosphate acyltransferase"/>
    <property type="match status" value="1"/>
</dbReference>
<dbReference type="Gene3D" id="3.40.718.10">
    <property type="entry name" value="Isopropylmalate Dehydrogenase"/>
    <property type="match status" value="1"/>
</dbReference>
<dbReference type="HAMAP" id="MF_00019">
    <property type="entry name" value="PlsX"/>
    <property type="match status" value="1"/>
</dbReference>
<dbReference type="InterPro" id="IPR003664">
    <property type="entry name" value="FA_synthesis"/>
</dbReference>
<dbReference type="InterPro" id="IPR012281">
    <property type="entry name" value="Phospholipid_synth_PlsX-like"/>
</dbReference>
<dbReference type="NCBIfam" id="TIGR00182">
    <property type="entry name" value="plsX"/>
    <property type="match status" value="1"/>
</dbReference>
<dbReference type="PANTHER" id="PTHR30100">
    <property type="entry name" value="FATTY ACID/PHOSPHOLIPID SYNTHESIS PROTEIN PLSX"/>
    <property type="match status" value="1"/>
</dbReference>
<dbReference type="PANTHER" id="PTHR30100:SF1">
    <property type="entry name" value="PHOSPHATE ACYLTRANSFERASE"/>
    <property type="match status" value="1"/>
</dbReference>
<dbReference type="Pfam" id="PF02504">
    <property type="entry name" value="FA_synthesis"/>
    <property type="match status" value="1"/>
</dbReference>
<dbReference type="PIRSF" id="PIRSF002465">
    <property type="entry name" value="Phsphlp_syn_PlsX"/>
    <property type="match status" value="1"/>
</dbReference>
<dbReference type="SUPFAM" id="SSF53659">
    <property type="entry name" value="Isocitrate/Isopropylmalate dehydrogenase-like"/>
    <property type="match status" value="1"/>
</dbReference>
<organism>
    <name type="scientific">Yersinia pseudotuberculosis serotype I (strain IP32953)</name>
    <dbReference type="NCBI Taxonomy" id="273123"/>
    <lineage>
        <taxon>Bacteria</taxon>
        <taxon>Pseudomonadati</taxon>
        <taxon>Pseudomonadota</taxon>
        <taxon>Gammaproteobacteria</taxon>
        <taxon>Enterobacterales</taxon>
        <taxon>Yersiniaceae</taxon>
        <taxon>Yersinia</taxon>
    </lineage>
</organism>
<name>PLSX_YERPS</name>
<keyword id="KW-0963">Cytoplasm</keyword>
<keyword id="KW-0444">Lipid biosynthesis</keyword>
<keyword id="KW-0443">Lipid metabolism</keyword>
<keyword id="KW-0594">Phospholipid biosynthesis</keyword>
<keyword id="KW-1208">Phospholipid metabolism</keyword>
<keyword id="KW-0808">Transferase</keyword>
<feature type="chain" id="PRO_0000189970" description="Phosphate acyltransferase">
    <location>
        <begin position="1"/>
        <end position="344"/>
    </location>
</feature>
<evidence type="ECO:0000255" key="1">
    <source>
        <dbReference type="HAMAP-Rule" id="MF_00019"/>
    </source>
</evidence>
<protein>
    <recommendedName>
        <fullName evidence="1">Phosphate acyltransferase</fullName>
        <ecNumber evidence="1">2.3.1.274</ecNumber>
    </recommendedName>
    <alternativeName>
        <fullName evidence="1">Acyl-ACP phosphotransacylase</fullName>
    </alternativeName>
    <alternativeName>
        <fullName evidence="1">Acyl-[acyl-carrier-protein]--phosphate acyltransferase</fullName>
    </alternativeName>
    <alternativeName>
        <fullName evidence="1">Phosphate-acyl-ACP acyltransferase</fullName>
    </alternativeName>
</protein>